<sequence length="266" mass="29992">MRKNTYAMRYVAGQPAERILPPGSFASIGQALPPGEPLSTEERIRILVWNIYKQQRAEWLSVLKNYGKDAHLVLLQEAQTTPELVQFATANYLAADQVPAFVLPQHPSGVMTLSAAHPVYCCPLREREPILRLAKSALVTVYPLPDTRLLMVVNIHAVNFSLGVDVYSKQLLPIGDQIAHHSGPVIMAGDFNAWSRRRMNALYRFAREMSLRQVRFTDDQRRRAFGRPLDFVFYRGLNVSEASVLVTRASDHNPLLVEFSPGKPDK</sequence>
<dbReference type="EMBL" id="CP000038">
    <property type="protein sequence ID" value="AAZ87008.1"/>
    <property type="molecule type" value="Genomic_DNA"/>
</dbReference>
<dbReference type="RefSeq" id="WP_001230983.1">
    <property type="nucleotide sequence ID" value="NC_007384.1"/>
</dbReference>
<dbReference type="SMR" id="Q3Z5F4"/>
<dbReference type="KEGG" id="ssn:SSON_0223"/>
<dbReference type="HOGENOM" id="CLU_083563_0_0_6"/>
<dbReference type="Proteomes" id="UP000002529">
    <property type="component" value="Chromosome"/>
</dbReference>
<dbReference type="GO" id="GO:0005737">
    <property type="term" value="C:cytoplasm"/>
    <property type="evidence" value="ECO:0007669"/>
    <property type="project" value="UniProtKB-SubCell"/>
</dbReference>
<dbReference type="GO" id="GO:0003824">
    <property type="term" value="F:catalytic activity"/>
    <property type="evidence" value="ECO:0007669"/>
    <property type="project" value="InterPro"/>
</dbReference>
<dbReference type="Gene3D" id="3.60.10.10">
    <property type="entry name" value="Endonuclease/exonuclease/phosphatase"/>
    <property type="match status" value="1"/>
</dbReference>
<dbReference type="HAMAP" id="MF_01119">
    <property type="entry name" value="UPF0294"/>
    <property type="match status" value="1"/>
</dbReference>
<dbReference type="InterPro" id="IPR036691">
    <property type="entry name" value="Endo/exonu/phosph_ase_sf"/>
</dbReference>
<dbReference type="InterPro" id="IPR005135">
    <property type="entry name" value="Endo/exonuclease/phosphatase"/>
</dbReference>
<dbReference type="InterPro" id="IPR022958">
    <property type="entry name" value="UPF0294"/>
</dbReference>
<dbReference type="NCBIfam" id="NF003839">
    <property type="entry name" value="PRK05421.1-1"/>
    <property type="match status" value="1"/>
</dbReference>
<dbReference type="NCBIfam" id="NF003840">
    <property type="entry name" value="PRK05421.1-2"/>
    <property type="match status" value="1"/>
</dbReference>
<dbReference type="NCBIfam" id="NF003841">
    <property type="entry name" value="PRK05421.1-3"/>
    <property type="match status" value="1"/>
</dbReference>
<dbReference type="NCBIfam" id="NF003842">
    <property type="entry name" value="PRK05421.1-4"/>
    <property type="match status" value="1"/>
</dbReference>
<dbReference type="Pfam" id="PF03372">
    <property type="entry name" value="Exo_endo_phos"/>
    <property type="match status" value="1"/>
</dbReference>
<dbReference type="SUPFAM" id="SSF56219">
    <property type="entry name" value="DNase I-like"/>
    <property type="match status" value="1"/>
</dbReference>
<reference key="1">
    <citation type="journal article" date="2005" name="Nucleic Acids Res.">
        <title>Genome dynamics and diversity of Shigella species, the etiologic agents of bacillary dysentery.</title>
        <authorList>
            <person name="Yang F."/>
            <person name="Yang J."/>
            <person name="Zhang X."/>
            <person name="Chen L."/>
            <person name="Jiang Y."/>
            <person name="Yan Y."/>
            <person name="Tang X."/>
            <person name="Wang J."/>
            <person name="Xiong Z."/>
            <person name="Dong J."/>
            <person name="Xue Y."/>
            <person name="Zhu Y."/>
            <person name="Xu X."/>
            <person name="Sun L."/>
            <person name="Chen S."/>
            <person name="Nie H."/>
            <person name="Peng J."/>
            <person name="Xu J."/>
            <person name="Wang Y."/>
            <person name="Yuan Z."/>
            <person name="Wen Y."/>
            <person name="Yao Z."/>
            <person name="Shen Y."/>
            <person name="Qiang B."/>
            <person name="Hou Y."/>
            <person name="Yu J."/>
            <person name="Jin Q."/>
        </authorList>
    </citation>
    <scope>NUCLEOTIDE SEQUENCE [LARGE SCALE GENOMIC DNA]</scope>
    <source>
        <strain>Ss046</strain>
    </source>
</reference>
<accession>Q3Z5F4</accession>
<feature type="chain" id="PRO_1000065257" description="UPF0294 protein YafD">
    <location>
        <begin position="1"/>
        <end position="266"/>
    </location>
</feature>
<gene>
    <name evidence="1" type="primary">yafD</name>
    <name type="ordered locus">SSON_0223</name>
</gene>
<proteinExistence type="inferred from homology"/>
<comment type="subcellular location">
    <subcellularLocation>
        <location evidence="1">Cytoplasm</location>
    </subcellularLocation>
</comment>
<comment type="similarity">
    <text evidence="1">Belongs to the UPF0294 family.</text>
</comment>
<name>YAFD_SHISS</name>
<organism>
    <name type="scientific">Shigella sonnei (strain Ss046)</name>
    <dbReference type="NCBI Taxonomy" id="300269"/>
    <lineage>
        <taxon>Bacteria</taxon>
        <taxon>Pseudomonadati</taxon>
        <taxon>Pseudomonadota</taxon>
        <taxon>Gammaproteobacteria</taxon>
        <taxon>Enterobacterales</taxon>
        <taxon>Enterobacteriaceae</taxon>
        <taxon>Shigella</taxon>
    </lineage>
</organism>
<protein>
    <recommendedName>
        <fullName evidence="1">UPF0294 protein YafD</fullName>
    </recommendedName>
</protein>
<keyword id="KW-0963">Cytoplasm</keyword>
<keyword id="KW-1185">Reference proteome</keyword>
<evidence type="ECO:0000255" key="1">
    <source>
        <dbReference type="HAMAP-Rule" id="MF_01119"/>
    </source>
</evidence>